<dbReference type="EC" id="6.1.1.21" evidence="1"/>
<dbReference type="EMBL" id="AP006618">
    <property type="protein sequence ID" value="BAD58512.1"/>
    <property type="molecule type" value="Genomic_DNA"/>
</dbReference>
<dbReference type="RefSeq" id="WP_011210197.1">
    <property type="nucleotide sequence ID" value="NC_006361.1"/>
</dbReference>
<dbReference type="SMR" id="Q5YTH9"/>
<dbReference type="STRING" id="247156.NFA_36640"/>
<dbReference type="GeneID" id="61134357"/>
<dbReference type="KEGG" id="nfa:NFA_36640"/>
<dbReference type="eggNOG" id="COG0124">
    <property type="taxonomic scope" value="Bacteria"/>
</dbReference>
<dbReference type="HOGENOM" id="CLU_025113_1_1_11"/>
<dbReference type="OrthoDB" id="9800814at2"/>
<dbReference type="Proteomes" id="UP000006820">
    <property type="component" value="Chromosome"/>
</dbReference>
<dbReference type="GO" id="GO:0005737">
    <property type="term" value="C:cytoplasm"/>
    <property type="evidence" value="ECO:0007669"/>
    <property type="project" value="UniProtKB-SubCell"/>
</dbReference>
<dbReference type="GO" id="GO:0005524">
    <property type="term" value="F:ATP binding"/>
    <property type="evidence" value="ECO:0007669"/>
    <property type="project" value="UniProtKB-UniRule"/>
</dbReference>
<dbReference type="GO" id="GO:0004821">
    <property type="term" value="F:histidine-tRNA ligase activity"/>
    <property type="evidence" value="ECO:0007669"/>
    <property type="project" value="UniProtKB-UniRule"/>
</dbReference>
<dbReference type="GO" id="GO:0006427">
    <property type="term" value="P:histidyl-tRNA aminoacylation"/>
    <property type="evidence" value="ECO:0007669"/>
    <property type="project" value="UniProtKB-UniRule"/>
</dbReference>
<dbReference type="CDD" id="cd00773">
    <property type="entry name" value="HisRS-like_core"/>
    <property type="match status" value="1"/>
</dbReference>
<dbReference type="CDD" id="cd00859">
    <property type="entry name" value="HisRS_anticodon"/>
    <property type="match status" value="1"/>
</dbReference>
<dbReference type="Gene3D" id="3.40.50.800">
    <property type="entry name" value="Anticodon-binding domain"/>
    <property type="match status" value="1"/>
</dbReference>
<dbReference type="Gene3D" id="3.30.930.10">
    <property type="entry name" value="Bira Bifunctional Protein, Domain 2"/>
    <property type="match status" value="1"/>
</dbReference>
<dbReference type="HAMAP" id="MF_00127">
    <property type="entry name" value="His_tRNA_synth"/>
    <property type="match status" value="1"/>
</dbReference>
<dbReference type="InterPro" id="IPR006195">
    <property type="entry name" value="aa-tRNA-synth_II"/>
</dbReference>
<dbReference type="InterPro" id="IPR045864">
    <property type="entry name" value="aa-tRNA-synth_II/BPL/LPL"/>
</dbReference>
<dbReference type="InterPro" id="IPR004154">
    <property type="entry name" value="Anticodon-bd"/>
</dbReference>
<dbReference type="InterPro" id="IPR036621">
    <property type="entry name" value="Anticodon-bd_dom_sf"/>
</dbReference>
<dbReference type="InterPro" id="IPR015807">
    <property type="entry name" value="His-tRNA-ligase"/>
</dbReference>
<dbReference type="InterPro" id="IPR041715">
    <property type="entry name" value="HisRS-like_core"/>
</dbReference>
<dbReference type="InterPro" id="IPR004516">
    <property type="entry name" value="HisRS/HisZ"/>
</dbReference>
<dbReference type="InterPro" id="IPR033656">
    <property type="entry name" value="HisRS_anticodon"/>
</dbReference>
<dbReference type="NCBIfam" id="TIGR00442">
    <property type="entry name" value="hisS"/>
    <property type="match status" value="1"/>
</dbReference>
<dbReference type="PANTHER" id="PTHR43707:SF1">
    <property type="entry name" value="HISTIDINE--TRNA LIGASE, MITOCHONDRIAL-RELATED"/>
    <property type="match status" value="1"/>
</dbReference>
<dbReference type="PANTHER" id="PTHR43707">
    <property type="entry name" value="HISTIDYL-TRNA SYNTHETASE"/>
    <property type="match status" value="1"/>
</dbReference>
<dbReference type="Pfam" id="PF03129">
    <property type="entry name" value="HGTP_anticodon"/>
    <property type="match status" value="1"/>
</dbReference>
<dbReference type="Pfam" id="PF13393">
    <property type="entry name" value="tRNA-synt_His"/>
    <property type="match status" value="1"/>
</dbReference>
<dbReference type="PIRSF" id="PIRSF001549">
    <property type="entry name" value="His-tRNA_synth"/>
    <property type="match status" value="1"/>
</dbReference>
<dbReference type="SUPFAM" id="SSF52954">
    <property type="entry name" value="Class II aaRS ABD-related"/>
    <property type="match status" value="1"/>
</dbReference>
<dbReference type="SUPFAM" id="SSF55681">
    <property type="entry name" value="Class II aaRS and biotin synthetases"/>
    <property type="match status" value="1"/>
</dbReference>
<dbReference type="PROSITE" id="PS50862">
    <property type="entry name" value="AA_TRNA_LIGASE_II"/>
    <property type="match status" value="1"/>
</dbReference>
<gene>
    <name evidence="1" type="primary">hisS</name>
    <name type="ordered locus">NFA_36640</name>
</gene>
<feature type="chain" id="PRO_0000136212" description="Histidine--tRNA ligase">
    <location>
        <begin position="1"/>
        <end position="422"/>
    </location>
</feature>
<keyword id="KW-0030">Aminoacyl-tRNA synthetase</keyword>
<keyword id="KW-0067">ATP-binding</keyword>
<keyword id="KW-0963">Cytoplasm</keyword>
<keyword id="KW-0436">Ligase</keyword>
<keyword id="KW-0547">Nucleotide-binding</keyword>
<keyword id="KW-0648">Protein biosynthesis</keyword>
<keyword id="KW-1185">Reference proteome</keyword>
<name>SYH_NOCFA</name>
<sequence>MTKTSSFSAPKGVPDYVPPGSAEFVAVRDALLRAARLAGYGHIELPIFEDTGLFARGVGESTDVVTKEMYTFADRGERSVTLRPEGTAGVMRAVIEHGLDRGQLPVKLVYSGPFFRYERPQAGRYRQLQQVGVEAIGVDDPALDAEVIAIADAGFRSLGLDGFRLELTSLGDDTCRPRYRELLQEFLFGLPLDEETRRRAELNPLRVLDDKRPEVRELLADAPLMIDHLSESAKAHFEQVLGHLDALGVPYVVNPRMVRGLDYYTKTTFEFVHDGLGAQSGIGGGGRYDGLMAQLGGQPLSGIGFGLGVDRTMLALQAEGKSAGDPARCDVFGVPLGEAAKQRMVVLAAQLRAAGVRVDLAYGGRGVKGAMKAADRSGARYTLVLGDRDLAEDTIGVKDMSTGDQRQVPLGEVVGVLRSELG</sequence>
<comment type="catalytic activity">
    <reaction evidence="1">
        <text>tRNA(His) + L-histidine + ATP = L-histidyl-tRNA(His) + AMP + diphosphate + H(+)</text>
        <dbReference type="Rhea" id="RHEA:17313"/>
        <dbReference type="Rhea" id="RHEA-COMP:9665"/>
        <dbReference type="Rhea" id="RHEA-COMP:9689"/>
        <dbReference type="ChEBI" id="CHEBI:15378"/>
        <dbReference type="ChEBI" id="CHEBI:30616"/>
        <dbReference type="ChEBI" id="CHEBI:33019"/>
        <dbReference type="ChEBI" id="CHEBI:57595"/>
        <dbReference type="ChEBI" id="CHEBI:78442"/>
        <dbReference type="ChEBI" id="CHEBI:78527"/>
        <dbReference type="ChEBI" id="CHEBI:456215"/>
        <dbReference type="EC" id="6.1.1.21"/>
    </reaction>
</comment>
<comment type="subunit">
    <text evidence="1">Homodimer.</text>
</comment>
<comment type="subcellular location">
    <subcellularLocation>
        <location evidence="1">Cytoplasm</location>
    </subcellularLocation>
</comment>
<comment type="similarity">
    <text evidence="1">Belongs to the class-II aminoacyl-tRNA synthetase family.</text>
</comment>
<accession>Q5YTH9</accession>
<organism>
    <name type="scientific">Nocardia farcinica (strain IFM 10152)</name>
    <dbReference type="NCBI Taxonomy" id="247156"/>
    <lineage>
        <taxon>Bacteria</taxon>
        <taxon>Bacillati</taxon>
        <taxon>Actinomycetota</taxon>
        <taxon>Actinomycetes</taxon>
        <taxon>Mycobacteriales</taxon>
        <taxon>Nocardiaceae</taxon>
        <taxon>Nocardia</taxon>
    </lineage>
</organism>
<protein>
    <recommendedName>
        <fullName evidence="1">Histidine--tRNA ligase</fullName>
        <ecNumber evidence="1">6.1.1.21</ecNumber>
    </recommendedName>
    <alternativeName>
        <fullName evidence="1">Histidyl-tRNA synthetase</fullName>
        <shortName evidence="1">HisRS</shortName>
    </alternativeName>
</protein>
<reference key="1">
    <citation type="journal article" date="2004" name="Proc. Natl. Acad. Sci. U.S.A.">
        <title>The complete genomic sequence of Nocardia farcinica IFM 10152.</title>
        <authorList>
            <person name="Ishikawa J."/>
            <person name="Yamashita A."/>
            <person name="Mikami Y."/>
            <person name="Hoshino Y."/>
            <person name="Kurita H."/>
            <person name="Hotta K."/>
            <person name="Shiba T."/>
            <person name="Hattori M."/>
        </authorList>
    </citation>
    <scope>NUCLEOTIDE SEQUENCE [LARGE SCALE GENOMIC DNA]</scope>
    <source>
        <strain>IFM 10152</strain>
    </source>
</reference>
<proteinExistence type="inferred from homology"/>
<evidence type="ECO:0000255" key="1">
    <source>
        <dbReference type="HAMAP-Rule" id="MF_00127"/>
    </source>
</evidence>